<dbReference type="SMR" id="P0DSL7"/>
<dbReference type="GO" id="GO:0005576">
    <property type="term" value="C:extracellular region"/>
    <property type="evidence" value="ECO:0007669"/>
    <property type="project" value="UniProtKB-SubCell"/>
</dbReference>
<reference key="1">
    <citation type="journal article" date="2000" name="Toxicon">
        <title>Isolation and characterization of myrmexins, six isoforms of venom proteins with anti-inflammatory activity from the tropical ant, Pseudomyrmex triplarinus.</title>
        <authorList>
            <person name="Pan J."/>
            <person name="Hink W.F."/>
        </authorList>
    </citation>
    <scope>PROTEIN SEQUENCE</scope>
    <scope>FUNCTION</scope>
    <scope>SUBCELLULAR LOCATION</scope>
    <scope>SUBUNIT</scope>
    <scope>IDENTIFICATION BY MASS SPECTROMETRY</scope>
    <source>
        <tissue>Venom</tissue>
    </source>
</reference>
<reference key="2">
    <citation type="journal article" date="2016" name="Toxins">
        <title>The biochemical toxin arsenal from ant venoms.</title>
        <authorList>
            <person name="Touchard A."/>
            <person name="Aili S.R."/>
            <person name="Fox E.G."/>
            <person name="Escoubas P."/>
            <person name="Orivel J."/>
            <person name="Nicholson G.M."/>
            <person name="Dejean A."/>
        </authorList>
    </citation>
    <scope>REVIEW</scope>
    <scope>NOMENCLATURE</scope>
</reference>
<comment type="function">
    <text evidence="1">This heterodimer may have anti-inflammatory properties, since the myrmexin complex (composed of 6 SS-LS heterodimers) inhibits carrageenin-induced edema in a dose-dependent manner (after subcutaneous injection into rats).</text>
</comment>
<comment type="subunit">
    <text evidence="1">Heterodimer composed of subunit LS1 and subunit SS1 (U1-PSDTX-Pt1b), heterodimer composed of subunit LS1 and SS2 (U1-PSDTX-Pt1b), and heterodimer composed of subunit LS1 and SS3; disulfide-linked.</text>
</comment>
<comment type="subcellular location">
    <subcellularLocation>
        <location evidence="1">Secreted</location>
    </subcellularLocation>
</comment>
<comment type="tissue specificity">
    <text evidence="5">Expressed by the venom gland.</text>
</comment>
<comment type="miscellaneous">
    <text evidence="5">There are 6 heterodimeric myrmexins which consist of a small subunit (SS1 or SS2 or SS3) disulfide-linked to a larger, quite structurally unrelated subunit (LS1 or LS2).</text>
</comment>
<comment type="miscellaneous">
    <text evidence="1">MALDI experiments give a mass of 6998 Da for U1-PSDTX-Pt1b heterodimer (SS1+LS1).</text>
</comment>
<comment type="miscellaneous">
    <text evidence="1">MALDI experiments give a mass of 7017 Da for U1-PSDTX-Pt1e heterodimer (SS2+LS1).</text>
</comment>
<comment type="miscellaneous">
    <text evidence="1">MALDI experiments give a mass of 7069 Da for U1-PSDTX-Pt1f heterodimer (SS3+LS1).</text>
</comment>
<comment type="similarity">
    <text evidence="4">Belongs to the myrmexin family.</text>
</comment>
<keyword id="KW-0903">Direct protein sequencing</keyword>
<keyword id="KW-1015">Disulfide bond</keyword>
<keyword id="KW-0964">Secreted</keyword>
<feature type="chain" id="PRO_0000447112" description="U1-pseudomyrmecitoxin-Pt1 subunit LS1">
    <location>
        <begin position="1"/>
        <end position="33"/>
    </location>
</feature>
<feature type="disulfide bond" description="Interchain (with C-17 in SS1 or SS2 or SS3)" evidence="4">
    <location>
        <position position="21"/>
    </location>
</feature>
<feature type="disulfide bond" description="Interchain (with C-26 in SS1 or SS2 or SS3)" evidence="4">
    <location>
        <position position="31"/>
    </location>
</feature>
<protein>
    <recommendedName>
        <fullName evidence="4">U1-pseudomyrmecitoxin-Pt1 subunit LS1</fullName>
        <shortName evidence="4">U1-PSDTX-Pt1 subunit LS1</shortName>
    </recommendedName>
    <alternativeName>
        <fullName evidence="2">Myrmexin II subunit LS1/Myrmexin V subunit LS1/Myrmexin VI subunit LS1</fullName>
    </alternativeName>
    <alternativeName>
        <fullName evidence="3">U1-pseudomyrmecitoxin-Pt1b subunit LS1/U1-pseudomyrmecitoxin-Pt1e subunit LS1/U1-pseudomyrmecitoxin-Pt1f subunit LS1</fullName>
        <shortName evidence="3">U1-PSDTX-Pt1b subunit LS1/U1-PSDTX-Pt1e subunit LS1/U1-PSDTX-Pt1f subunit LS1</shortName>
    </alternativeName>
</protein>
<proteinExistence type="evidence at protein level"/>
<evidence type="ECO:0000269" key="1">
    <source>
    </source>
</evidence>
<evidence type="ECO:0000303" key="2">
    <source>
    </source>
</evidence>
<evidence type="ECO:0000303" key="3">
    <source>
    </source>
</evidence>
<evidence type="ECO:0000305" key="4"/>
<evidence type="ECO:0000305" key="5">
    <source>
    </source>
</evidence>
<name>TXLS1_PSETR</name>
<accession>P0DSL7</accession>
<sequence length="33" mass="3532">LSLGTIKKLLQILAQGLKAICNHRDLIAKGCQA</sequence>
<organism>
    <name type="scientific">Pseudomyrmex triplarinus</name>
    <name type="common">Ant</name>
    <dbReference type="NCBI Taxonomy" id="600763"/>
    <lineage>
        <taxon>Eukaryota</taxon>
        <taxon>Metazoa</taxon>
        <taxon>Ecdysozoa</taxon>
        <taxon>Arthropoda</taxon>
        <taxon>Hexapoda</taxon>
        <taxon>Insecta</taxon>
        <taxon>Pterygota</taxon>
        <taxon>Neoptera</taxon>
        <taxon>Endopterygota</taxon>
        <taxon>Hymenoptera</taxon>
        <taxon>Apocrita</taxon>
        <taxon>Aculeata</taxon>
        <taxon>Formicoidea</taxon>
        <taxon>Formicidae</taxon>
        <taxon>Pseudomyrmecinae</taxon>
        <taxon>Pseudomyrmex</taxon>
    </lineage>
</organism>